<accession>P86899</accession>
<sequence>MAYVRLTSLAVLFFLAASVMKTEGGLPTCGETCTLGTCYVPDCSCSWPICMKNHIIAANAKTVNEHRLLCTSHEDCFKKGTGNYCASFPDSNIHFGWCFHAESEGYLLKDFMNMSKDDLKMPLESTN</sequence>
<protein>
    <recommendedName>
        <fullName evidence="4">Cyclotide cter-M</fullName>
    </recommendedName>
</protein>
<dbReference type="EMBL" id="JF501210">
    <property type="protein sequence ID" value="AEB92229.1"/>
    <property type="molecule type" value="mRNA"/>
</dbReference>
<dbReference type="PDB" id="2LAM">
    <property type="method" value="NMR"/>
    <property type="chains" value="A=25-53"/>
</dbReference>
<dbReference type="PDBsum" id="2LAM"/>
<dbReference type="BMRB" id="P86899"/>
<dbReference type="SMR" id="P86899"/>
<dbReference type="EvolutionaryTrace" id="P86899"/>
<dbReference type="GO" id="GO:0005576">
    <property type="term" value="C:extracellular region"/>
    <property type="evidence" value="ECO:0007669"/>
    <property type="project" value="UniProtKB-SubCell"/>
</dbReference>
<dbReference type="GO" id="GO:0006952">
    <property type="term" value="P:defense response"/>
    <property type="evidence" value="ECO:0007669"/>
    <property type="project" value="UniProtKB-KW"/>
</dbReference>
<dbReference type="GO" id="GO:0031640">
    <property type="term" value="P:killing of cells of another organism"/>
    <property type="evidence" value="ECO:0007669"/>
    <property type="project" value="UniProtKB-KW"/>
</dbReference>
<dbReference type="InterPro" id="IPR032000">
    <property type="entry name" value="Albumin_I_a"/>
</dbReference>
<dbReference type="InterPro" id="IPR005535">
    <property type="entry name" value="Cyclotide"/>
</dbReference>
<dbReference type="InterPro" id="IPR012324">
    <property type="entry name" value="Cyclotide_moebius_CS"/>
</dbReference>
<dbReference type="InterPro" id="IPR036146">
    <property type="entry name" value="Cyclotide_sf"/>
</dbReference>
<dbReference type="Pfam" id="PF16720">
    <property type="entry name" value="Albumin_I_a"/>
    <property type="match status" value="1"/>
</dbReference>
<dbReference type="Pfam" id="PF03784">
    <property type="entry name" value="Cyclotide"/>
    <property type="match status" value="1"/>
</dbReference>
<dbReference type="SUPFAM" id="SSF57038">
    <property type="entry name" value="Cyclotides"/>
    <property type="match status" value="1"/>
</dbReference>
<dbReference type="PROSITE" id="PS51052">
    <property type="entry name" value="CYCLOTIDE"/>
    <property type="match status" value="1"/>
</dbReference>
<dbReference type="PROSITE" id="PS60009">
    <property type="entry name" value="CYCLOTIDE_MOEBIUS"/>
    <property type="match status" value="1"/>
</dbReference>
<feature type="signal peptide" evidence="1 4">
    <location>
        <begin position="1"/>
        <end position="24"/>
    </location>
</feature>
<feature type="peptide" id="PRO_0000412637" description="Cyclotide cter-M" evidence="2 3">
    <location>
        <begin position="25"/>
        <end position="53"/>
    </location>
</feature>
<feature type="propeptide" id="PRO_0000412638" evidence="3">
    <location>
        <begin position="54"/>
        <end position="127"/>
    </location>
</feature>
<feature type="modified residue" description="Methionine sulfoxide" evidence="3">
    <location>
        <position position="51"/>
    </location>
</feature>
<feature type="disulfide bond" evidence="2 3">
    <location>
        <begin position="29"/>
        <end position="43"/>
    </location>
</feature>
<feature type="disulfide bond" evidence="2 3">
    <location>
        <begin position="33"/>
        <end position="45"/>
    </location>
</feature>
<feature type="disulfide bond" evidence="2 3">
    <location>
        <begin position="38"/>
        <end position="50"/>
    </location>
</feature>
<feature type="cross-link" description="Cyclopeptide (Gly-Asn)" evidence="3">
    <location>
        <begin position="25"/>
        <end position="53"/>
    </location>
</feature>
<feature type="strand" evidence="6">
    <location>
        <begin position="34"/>
        <end position="36"/>
    </location>
</feature>
<feature type="strand" evidence="6">
    <location>
        <begin position="44"/>
        <end position="46"/>
    </location>
</feature>
<feature type="strand" evidence="6">
    <location>
        <begin position="49"/>
        <end position="52"/>
    </location>
</feature>
<proteinExistence type="evidence at protein level"/>
<reference evidence="5" key="1">
    <citation type="journal article" date="2011" name="Proc. Natl. Acad. Sci. U.S.A.">
        <title>Discovery of an unusual biosynthetic origin for circular proteins in legumes.</title>
        <authorList>
            <person name="Poth A.G."/>
            <person name="Colgrave M.L."/>
            <person name="Lyons R.E."/>
            <person name="Daly N.L."/>
            <person name="Craik D.J."/>
        </authorList>
    </citation>
    <scope>NUCLEOTIDE SEQUENCE [MRNA]</scope>
    <scope>PROTEIN SEQUENCE OF 25-53</scope>
    <scope>STRUCTURE BY NMR OF 25-53</scope>
    <scope>FUNCTION</scope>
    <scope>SUBCELLULAR LOCATION</scope>
    <scope>CYCLIZATION</scope>
    <scope>MASS SPECTROMETRY</scope>
    <scope>DISULFIDE BONDS</scope>
    <scope>OXIDATION AT MET-51</scope>
    <source>
        <tissue evidence="3">Leaf</tissue>
    </source>
</reference>
<evidence type="ECO:0000255" key="1"/>
<evidence type="ECO:0000255" key="2">
    <source>
        <dbReference type="PROSITE-ProRule" id="PRU00395"/>
    </source>
</evidence>
<evidence type="ECO:0000269" key="3">
    <source>
    </source>
</evidence>
<evidence type="ECO:0000303" key="4">
    <source>
    </source>
</evidence>
<evidence type="ECO:0000305" key="5"/>
<evidence type="ECO:0007829" key="6">
    <source>
        <dbReference type="PDB" id="2LAM"/>
    </source>
</evidence>
<comment type="function">
    <text evidence="2 3">Probably participates in a plant defense mechanism. Displays insecticidal activity against H.armigera. Has weak hemolytic activity. Binds to phospholipid membranes.</text>
</comment>
<comment type="subcellular location">
    <subcellularLocation>
        <location evidence="3">Secreted</location>
    </subcellularLocation>
</comment>
<comment type="domain">
    <text evidence="3">The presence of a 'disulfide through disulfide knot' structurally defines this protein as a knottin.</text>
</comment>
<comment type="domain">
    <text evidence="3">Displays an unusual domain structure in comparison to other known cyclotides as the cyclotide is followed by a C-terminal albumin-like region.</text>
</comment>
<comment type="PTM">
    <text evidence="3">Cyclotide cter-M is a cyclic peptide.</text>
</comment>
<comment type="mass spectrometry"/>
<comment type="similarity">
    <text evidence="2">Belongs to the cyclotide family. Moebius subfamily.</text>
</comment>
<name>CYCM_CLITE</name>
<keyword id="KW-0002">3D-structure</keyword>
<keyword id="KW-0204">Cytolysis</keyword>
<keyword id="KW-0903">Direct protein sequencing</keyword>
<keyword id="KW-1015">Disulfide bond</keyword>
<keyword id="KW-0354">Hemolysis</keyword>
<keyword id="KW-0960">Knottin</keyword>
<keyword id="KW-0558">Oxidation</keyword>
<keyword id="KW-0611">Plant defense</keyword>
<keyword id="KW-0964">Secreted</keyword>
<keyword id="KW-0732">Signal</keyword>
<organism>
    <name type="scientific">Clitoria ternatea</name>
    <name type="common">Butterfly pea</name>
    <dbReference type="NCBI Taxonomy" id="43366"/>
    <lineage>
        <taxon>Eukaryota</taxon>
        <taxon>Viridiplantae</taxon>
        <taxon>Streptophyta</taxon>
        <taxon>Embryophyta</taxon>
        <taxon>Tracheophyta</taxon>
        <taxon>Spermatophyta</taxon>
        <taxon>Magnoliopsida</taxon>
        <taxon>eudicotyledons</taxon>
        <taxon>Gunneridae</taxon>
        <taxon>Pentapetalae</taxon>
        <taxon>rosids</taxon>
        <taxon>fabids</taxon>
        <taxon>Fabales</taxon>
        <taxon>Fabaceae</taxon>
        <taxon>Papilionoideae</taxon>
        <taxon>50 kb inversion clade</taxon>
        <taxon>NPAAA clade</taxon>
        <taxon>indigoferoid/millettioid clade</taxon>
        <taxon>Phaseoleae</taxon>
        <taxon>Clitoria</taxon>
    </lineage>
</organism>